<feature type="chain" id="PRO_0000138353" description="UvrABC system protein C">
    <location>
        <begin position="1"/>
        <end position="626"/>
    </location>
</feature>
<feature type="domain" description="GIY-YIG" evidence="1">
    <location>
        <begin position="26"/>
        <end position="105"/>
    </location>
</feature>
<feature type="domain" description="UVR" evidence="1">
    <location>
        <begin position="215"/>
        <end position="250"/>
    </location>
</feature>
<reference key="1">
    <citation type="journal article" date="1996" name="DNA Res.">
        <title>Sequence analysis of the genome of the unicellular cyanobacterium Synechocystis sp. strain PCC6803. II. Sequence determination of the entire genome and assignment of potential protein-coding regions.</title>
        <authorList>
            <person name="Kaneko T."/>
            <person name="Sato S."/>
            <person name="Kotani H."/>
            <person name="Tanaka A."/>
            <person name="Asamizu E."/>
            <person name="Nakamura Y."/>
            <person name="Miyajima N."/>
            <person name="Hirosawa M."/>
            <person name="Sugiura M."/>
            <person name="Sasamoto S."/>
            <person name="Kimura T."/>
            <person name="Hosouchi T."/>
            <person name="Matsuno A."/>
            <person name="Muraki A."/>
            <person name="Nakazaki N."/>
            <person name="Naruo K."/>
            <person name="Okumura S."/>
            <person name="Shimpo S."/>
            <person name="Takeuchi C."/>
            <person name="Wada T."/>
            <person name="Watanabe A."/>
            <person name="Yamada M."/>
            <person name="Yasuda M."/>
            <person name="Tabata S."/>
        </authorList>
    </citation>
    <scope>NUCLEOTIDE SEQUENCE [LARGE SCALE GENOMIC DNA]</scope>
    <source>
        <strain>ATCC 27184 / PCC 6803 / Kazusa</strain>
    </source>
</reference>
<reference key="2">
    <citation type="journal article" date="2004" name="Mol. Microbiol.">
        <title>Function and regulation of the cyanobacterial genes lexA, recA and ruvB: LexA is critical to the survival of cells facing inorganic carbon starvation.</title>
        <authorList>
            <person name="Domain F."/>
            <person name="Houot L."/>
            <person name="Chauvat F."/>
            <person name="Cassier-Chauvat C."/>
        </authorList>
    </citation>
    <scope>DISCUSSION OF SOS REGULON</scope>
    <source>
        <strain>ATCC 27184 / PCC 6803 / Kazusa</strain>
    </source>
</reference>
<proteinExistence type="inferred from homology"/>
<evidence type="ECO:0000255" key="1">
    <source>
        <dbReference type="HAMAP-Rule" id="MF_00203"/>
    </source>
</evidence>
<evidence type="ECO:0000305" key="2">
    <source>
    </source>
</evidence>
<comment type="function">
    <text evidence="1">The UvrABC repair system catalyzes the recognition and processing of DNA lesions. UvrC both incises the 5' and 3' sides of the lesion. The N-terminal half is responsible for the 3' incision and the C-terminal half is responsible for the 5' incision.</text>
</comment>
<comment type="subunit">
    <text evidence="1">Interacts with UvrB in an incision complex.</text>
</comment>
<comment type="subcellular location">
    <subcellularLocation>
        <location evidence="1">Cytoplasm</location>
    </subcellularLocation>
</comment>
<comment type="miscellaneous">
    <text evidence="2">This bacterium is considerably more resistant to UV and gamma irradiation than E.coli; the E.coli-like SOS regulon model is not an appropriate model for DNA repair in this cyanobacterium.</text>
</comment>
<comment type="similarity">
    <text evidence="1">Belongs to the UvrC family.</text>
</comment>
<keyword id="KW-0963">Cytoplasm</keyword>
<keyword id="KW-0227">DNA damage</keyword>
<keyword id="KW-0228">DNA excision</keyword>
<keyword id="KW-0234">DNA repair</keyword>
<keyword id="KW-0267">Excision nuclease</keyword>
<keyword id="KW-1185">Reference proteome</keyword>
<gene>
    <name evidence="1" type="primary">uvrC</name>
    <name type="ordered locus">sll0865</name>
</gene>
<name>UVRC_SYNY3</name>
<protein>
    <recommendedName>
        <fullName evidence="1">UvrABC system protein C</fullName>
        <shortName evidence="1">Protein UvrC</shortName>
    </recommendedName>
    <alternativeName>
        <fullName evidence="1">Excinuclease ABC subunit C</fullName>
    </alternativeName>
</protein>
<sequence>MVATVSSTSLLEQPELLERRLQEIPQEPGVYFMGDRQGEILYIGKAKKLRTRVRSYFRDSQPHTARIALMVQQVAEIEFIVTDTEAEALALEANLIKQHQPHFNVLLKDDKKYPYVCITWSETYPRIFITRKRRLNQAKDRYYGPYVDSFSLRQTLRLIQRIFPLRQRRQPLFKHRPCLNYDIGRCPGVCQELITPEDYRQTLQKVAMVFQGRTQELHQLLTQQMEKAAADLKFEQAALIRDQINSLGKLNADQKVSLPQDTISRDAIAVASDGQISAIQLFQIRAGRLVGRLGFFADGVESELEKGEVLQRVLEQHYQQVEAVEIPSEVILPCALPDGELLNDWLTSQRGRKVTFNLPQRQTKAELLEMVERNAQYELERLQKQTAKNVTALEDLAEILNLETLPKRIEGYDISHIQGSNAVASQVVFIDGVPAQQYYRHYKIKNPSIKVGHSDDFASLAEVIIRRFQSSVKGKKNQQDWPDLIMIDGGKGQLSAVVKVLKKMDLLDKFTVVSLAKQREEIFLPGESQPLPTHAEQPGVQLLRRLRDEAHRFAVSFHRQQRLSKSRRSRLDEIPGLGFSRQKQLLAHFRSLDYIREASVKQLQEVPGIGPQLAQTIYDYFHPVNS</sequence>
<accession>P73580</accession>
<organism>
    <name type="scientific">Synechocystis sp. (strain ATCC 27184 / PCC 6803 / Kazusa)</name>
    <dbReference type="NCBI Taxonomy" id="1111708"/>
    <lineage>
        <taxon>Bacteria</taxon>
        <taxon>Bacillati</taxon>
        <taxon>Cyanobacteriota</taxon>
        <taxon>Cyanophyceae</taxon>
        <taxon>Synechococcales</taxon>
        <taxon>Merismopediaceae</taxon>
        <taxon>Synechocystis</taxon>
    </lineage>
</organism>
<dbReference type="EMBL" id="BA000022">
    <property type="protein sequence ID" value="BAA17620.1"/>
    <property type="molecule type" value="Genomic_DNA"/>
</dbReference>
<dbReference type="PIR" id="S77286">
    <property type="entry name" value="S77286"/>
</dbReference>
<dbReference type="SMR" id="P73580"/>
<dbReference type="FunCoup" id="P73580">
    <property type="interactions" value="331"/>
</dbReference>
<dbReference type="IntAct" id="P73580">
    <property type="interactions" value="31"/>
</dbReference>
<dbReference type="STRING" id="1148.gene:10498487"/>
<dbReference type="PaxDb" id="1148-1652700"/>
<dbReference type="EnsemblBacteria" id="BAA17620">
    <property type="protein sequence ID" value="BAA17620"/>
    <property type="gene ID" value="BAA17620"/>
</dbReference>
<dbReference type="KEGG" id="syn:sll0865"/>
<dbReference type="eggNOG" id="COG0322">
    <property type="taxonomic scope" value="Bacteria"/>
</dbReference>
<dbReference type="InParanoid" id="P73580"/>
<dbReference type="PhylomeDB" id="P73580"/>
<dbReference type="Proteomes" id="UP000001425">
    <property type="component" value="Chromosome"/>
</dbReference>
<dbReference type="GO" id="GO:0005737">
    <property type="term" value="C:cytoplasm"/>
    <property type="evidence" value="ECO:0007669"/>
    <property type="project" value="UniProtKB-SubCell"/>
</dbReference>
<dbReference type="GO" id="GO:0009380">
    <property type="term" value="C:excinuclease repair complex"/>
    <property type="evidence" value="ECO:0000318"/>
    <property type="project" value="GO_Central"/>
</dbReference>
<dbReference type="GO" id="GO:0003677">
    <property type="term" value="F:DNA binding"/>
    <property type="evidence" value="ECO:0007669"/>
    <property type="project" value="UniProtKB-UniRule"/>
</dbReference>
<dbReference type="GO" id="GO:0009381">
    <property type="term" value="F:excinuclease ABC activity"/>
    <property type="evidence" value="ECO:0007669"/>
    <property type="project" value="UniProtKB-UniRule"/>
</dbReference>
<dbReference type="GO" id="GO:0006974">
    <property type="term" value="P:DNA damage response"/>
    <property type="evidence" value="ECO:0000318"/>
    <property type="project" value="GO_Central"/>
</dbReference>
<dbReference type="GO" id="GO:0006289">
    <property type="term" value="P:nucleotide-excision repair"/>
    <property type="evidence" value="ECO:0007669"/>
    <property type="project" value="UniProtKB-UniRule"/>
</dbReference>
<dbReference type="GO" id="GO:0009432">
    <property type="term" value="P:SOS response"/>
    <property type="evidence" value="ECO:0007669"/>
    <property type="project" value="UniProtKB-UniRule"/>
</dbReference>
<dbReference type="CDD" id="cd10434">
    <property type="entry name" value="GIY-YIG_UvrC_Cho"/>
    <property type="match status" value="1"/>
</dbReference>
<dbReference type="FunFam" id="3.40.1440.10:FF:000001">
    <property type="entry name" value="UvrABC system protein C"/>
    <property type="match status" value="1"/>
</dbReference>
<dbReference type="Gene3D" id="1.10.150.20">
    <property type="entry name" value="5' to 3' exonuclease, C-terminal subdomain"/>
    <property type="match status" value="1"/>
</dbReference>
<dbReference type="Gene3D" id="3.40.1440.10">
    <property type="entry name" value="GIY-YIG endonuclease"/>
    <property type="match status" value="1"/>
</dbReference>
<dbReference type="Gene3D" id="4.10.860.10">
    <property type="entry name" value="UVR domain"/>
    <property type="match status" value="1"/>
</dbReference>
<dbReference type="Gene3D" id="3.30.420.340">
    <property type="entry name" value="UvrC, RNAse H endonuclease domain"/>
    <property type="match status" value="1"/>
</dbReference>
<dbReference type="HAMAP" id="MF_00203">
    <property type="entry name" value="UvrC"/>
    <property type="match status" value="1"/>
</dbReference>
<dbReference type="InterPro" id="IPR041663">
    <property type="entry name" value="DisA/LigA_HHH"/>
</dbReference>
<dbReference type="InterPro" id="IPR000305">
    <property type="entry name" value="GIY-YIG_endonuc"/>
</dbReference>
<dbReference type="InterPro" id="IPR035901">
    <property type="entry name" value="GIY-YIG_endonuc_sf"/>
</dbReference>
<dbReference type="InterPro" id="IPR047296">
    <property type="entry name" value="GIY-YIG_UvrC_Cho"/>
</dbReference>
<dbReference type="InterPro" id="IPR003583">
    <property type="entry name" value="Hlx-hairpin-Hlx_DNA-bd_motif"/>
</dbReference>
<dbReference type="InterPro" id="IPR010994">
    <property type="entry name" value="RuvA_2-like"/>
</dbReference>
<dbReference type="InterPro" id="IPR001943">
    <property type="entry name" value="UVR_dom"/>
</dbReference>
<dbReference type="InterPro" id="IPR036876">
    <property type="entry name" value="UVR_dom_sf"/>
</dbReference>
<dbReference type="InterPro" id="IPR050066">
    <property type="entry name" value="UvrABC_protein_C"/>
</dbReference>
<dbReference type="InterPro" id="IPR004791">
    <property type="entry name" value="UvrC"/>
</dbReference>
<dbReference type="InterPro" id="IPR001162">
    <property type="entry name" value="UvrC_RNase_H_dom"/>
</dbReference>
<dbReference type="InterPro" id="IPR038476">
    <property type="entry name" value="UvrC_RNase_H_dom_sf"/>
</dbReference>
<dbReference type="NCBIfam" id="NF001824">
    <property type="entry name" value="PRK00558.1-5"/>
    <property type="match status" value="1"/>
</dbReference>
<dbReference type="NCBIfam" id="TIGR00194">
    <property type="entry name" value="uvrC"/>
    <property type="match status" value="1"/>
</dbReference>
<dbReference type="PANTHER" id="PTHR30562:SF1">
    <property type="entry name" value="UVRABC SYSTEM PROTEIN C"/>
    <property type="match status" value="1"/>
</dbReference>
<dbReference type="PANTHER" id="PTHR30562">
    <property type="entry name" value="UVRC/OXIDOREDUCTASE"/>
    <property type="match status" value="1"/>
</dbReference>
<dbReference type="Pfam" id="PF01541">
    <property type="entry name" value="GIY-YIG"/>
    <property type="match status" value="1"/>
</dbReference>
<dbReference type="Pfam" id="PF12826">
    <property type="entry name" value="HHH_2"/>
    <property type="match status" value="1"/>
</dbReference>
<dbReference type="Pfam" id="PF02151">
    <property type="entry name" value="UVR"/>
    <property type="match status" value="1"/>
</dbReference>
<dbReference type="Pfam" id="PF22920">
    <property type="entry name" value="UvrC_RNaseH"/>
    <property type="match status" value="1"/>
</dbReference>
<dbReference type="Pfam" id="PF08459">
    <property type="entry name" value="UvrC_RNaseH_dom"/>
    <property type="match status" value="1"/>
</dbReference>
<dbReference type="SMART" id="SM00465">
    <property type="entry name" value="GIYc"/>
    <property type="match status" value="1"/>
</dbReference>
<dbReference type="SMART" id="SM00278">
    <property type="entry name" value="HhH1"/>
    <property type="match status" value="2"/>
</dbReference>
<dbReference type="SUPFAM" id="SSF46600">
    <property type="entry name" value="C-terminal UvrC-binding domain of UvrB"/>
    <property type="match status" value="1"/>
</dbReference>
<dbReference type="SUPFAM" id="SSF82771">
    <property type="entry name" value="GIY-YIG endonuclease"/>
    <property type="match status" value="1"/>
</dbReference>
<dbReference type="SUPFAM" id="SSF47781">
    <property type="entry name" value="RuvA domain 2-like"/>
    <property type="match status" value="1"/>
</dbReference>
<dbReference type="PROSITE" id="PS50164">
    <property type="entry name" value="GIY_YIG"/>
    <property type="match status" value="1"/>
</dbReference>
<dbReference type="PROSITE" id="PS50151">
    <property type="entry name" value="UVR"/>
    <property type="match status" value="1"/>
</dbReference>
<dbReference type="PROSITE" id="PS50165">
    <property type="entry name" value="UVRC"/>
    <property type="match status" value="1"/>
</dbReference>